<name>RS8_NEIMA</name>
<reference key="1">
    <citation type="journal article" date="2000" name="Nature">
        <title>Complete DNA sequence of a serogroup A strain of Neisseria meningitidis Z2491.</title>
        <authorList>
            <person name="Parkhill J."/>
            <person name="Achtman M."/>
            <person name="James K.D."/>
            <person name="Bentley S.D."/>
            <person name="Churcher C.M."/>
            <person name="Klee S.R."/>
            <person name="Morelli G."/>
            <person name="Basham D."/>
            <person name="Brown D."/>
            <person name="Chillingworth T."/>
            <person name="Davies R.M."/>
            <person name="Davis P."/>
            <person name="Devlin K."/>
            <person name="Feltwell T."/>
            <person name="Hamlin N."/>
            <person name="Holroyd S."/>
            <person name="Jagels K."/>
            <person name="Leather S."/>
            <person name="Moule S."/>
            <person name="Mungall K.L."/>
            <person name="Quail M.A."/>
            <person name="Rajandream M.A."/>
            <person name="Rutherford K.M."/>
            <person name="Simmonds M."/>
            <person name="Skelton J."/>
            <person name="Whitehead S."/>
            <person name="Spratt B.G."/>
            <person name="Barrell B.G."/>
        </authorList>
    </citation>
    <scope>NUCLEOTIDE SEQUENCE [LARGE SCALE GENOMIC DNA]</scope>
    <source>
        <strain>DSM 15465 / Z2491</strain>
    </source>
</reference>
<accession>P66627</accession>
<accession>A1INX6</accession>
<accession>Q9JR58</accession>
<evidence type="ECO:0000255" key="1">
    <source>
        <dbReference type="HAMAP-Rule" id="MF_01302"/>
    </source>
</evidence>
<evidence type="ECO:0000305" key="2"/>
<comment type="function">
    <text evidence="1">One of the primary rRNA binding proteins, it binds directly to 16S rRNA central domain where it helps coordinate assembly of the platform of the 30S subunit.</text>
</comment>
<comment type="subunit">
    <text evidence="1">Part of the 30S ribosomal subunit. Contacts proteins S5 and S12.</text>
</comment>
<comment type="similarity">
    <text evidence="1">Belongs to the universal ribosomal protein uS8 family.</text>
</comment>
<organism>
    <name type="scientific">Neisseria meningitidis serogroup A / serotype 4A (strain DSM 15465 / Z2491)</name>
    <dbReference type="NCBI Taxonomy" id="122587"/>
    <lineage>
        <taxon>Bacteria</taxon>
        <taxon>Pseudomonadati</taxon>
        <taxon>Pseudomonadota</taxon>
        <taxon>Betaproteobacteria</taxon>
        <taxon>Neisseriales</taxon>
        <taxon>Neisseriaceae</taxon>
        <taxon>Neisseria</taxon>
    </lineage>
</organism>
<proteinExistence type="inferred from homology"/>
<protein>
    <recommendedName>
        <fullName evidence="1">Small ribosomal subunit protein uS8</fullName>
    </recommendedName>
    <alternativeName>
        <fullName evidence="2">30S ribosomal protein S8</fullName>
    </alternativeName>
</protein>
<feature type="chain" id="PRO_0000126451" description="Small ribosomal subunit protein uS8">
    <location>
        <begin position="1"/>
        <end position="130"/>
    </location>
</feature>
<keyword id="KW-0687">Ribonucleoprotein</keyword>
<keyword id="KW-0689">Ribosomal protein</keyword>
<keyword id="KW-0694">RNA-binding</keyword>
<keyword id="KW-0699">rRNA-binding</keyword>
<dbReference type="EMBL" id="AL157959">
    <property type="protein sequence ID" value="CAM07433.1"/>
    <property type="molecule type" value="Genomic_DNA"/>
</dbReference>
<dbReference type="RefSeq" id="WP_002215438.1">
    <property type="nucleotide sequence ID" value="NC_003116.1"/>
</dbReference>
<dbReference type="SMR" id="P66627"/>
<dbReference type="EnsemblBacteria" id="CAM07433">
    <property type="protein sequence ID" value="CAM07433"/>
    <property type="gene ID" value="NMA0115"/>
</dbReference>
<dbReference type="GeneID" id="93387231"/>
<dbReference type="KEGG" id="nma:NMA0115"/>
<dbReference type="HOGENOM" id="CLU_098428_0_0_4"/>
<dbReference type="Proteomes" id="UP000000626">
    <property type="component" value="Chromosome"/>
</dbReference>
<dbReference type="GO" id="GO:1990904">
    <property type="term" value="C:ribonucleoprotein complex"/>
    <property type="evidence" value="ECO:0007669"/>
    <property type="project" value="UniProtKB-KW"/>
</dbReference>
<dbReference type="GO" id="GO:0005840">
    <property type="term" value="C:ribosome"/>
    <property type="evidence" value="ECO:0007669"/>
    <property type="project" value="UniProtKB-KW"/>
</dbReference>
<dbReference type="GO" id="GO:0019843">
    <property type="term" value="F:rRNA binding"/>
    <property type="evidence" value="ECO:0007669"/>
    <property type="project" value="UniProtKB-UniRule"/>
</dbReference>
<dbReference type="GO" id="GO:0003735">
    <property type="term" value="F:structural constituent of ribosome"/>
    <property type="evidence" value="ECO:0007669"/>
    <property type="project" value="InterPro"/>
</dbReference>
<dbReference type="GO" id="GO:0006412">
    <property type="term" value="P:translation"/>
    <property type="evidence" value="ECO:0007669"/>
    <property type="project" value="UniProtKB-UniRule"/>
</dbReference>
<dbReference type="FunFam" id="3.30.1370.30:FF:000003">
    <property type="entry name" value="30S ribosomal protein S8"/>
    <property type="match status" value="1"/>
</dbReference>
<dbReference type="FunFam" id="3.30.1490.10:FF:000001">
    <property type="entry name" value="30S ribosomal protein S8"/>
    <property type="match status" value="1"/>
</dbReference>
<dbReference type="Gene3D" id="3.30.1370.30">
    <property type="match status" value="1"/>
</dbReference>
<dbReference type="Gene3D" id="3.30.1490.10">
    <property type="match status" value="1"/>
</dbReference>
<dbReference type="HAMAP" id="MF_01302_B">
    <property type="entry name" value="Ribosomal_uS8_B"/>
    <property type="match status" value="1"/>
</dbReference>
<dbReference type="InterPro" id="IPR000630">
    <property type="entry name" value="Ribosomal_uS8"/>
</dbReference>
<dbReference type="InterPro" id="IPR047863">
    <property type="entry name" value="Ribosomal_uS8_CS"/>
</dbReference>
<dbReference type="InterPro" id="IPR035987">
    <property type="entry name" value="Ribosomal_uS8_sf"/>
</dbReference>
<dbReference type="NCBIfam" id="NF001109">
    <property type="entry name" value="PRK00136.1"/>
    <property type="match status" value="1"/>
</dbReference>
<dbReference type="PANTHER" id="PTHR11758">
    <property type="entry name" value="40S RIBOSOMAL PROTEIN S15A"/>
    <property type="match status" value="1"/>
</dbReference>
<dbReference type="Pfam" id="PF00410">
    <property type="entry name" value="Ribosomal_S8"/>
    <property type="match status" value="1"/>
</dbReference>
<dbReference type="SUPFAM" id="SSF56047">
    <property type="entry name" value="Ribosomal protein S8"/>
    <property type="match status" value="1"/>
</dbReference>
<dbReference type="PROSITE" id="PS00053">
    <property type="entry name" value="RIBOSOMAL_S8"/>
    <property type="match status" value="1"/>
</dbReference>
<gene>
    <name evidence="1" type="primary">rpsH</name>
    <name type="ordered locus">NMA0115</name>
</gene>
<sequence>MSMHDPISDMLTRIRNAQRANKAAVAMPSSKLKCAIAKVLKEEGYIEDFAVSSDVKSILEIQLKYYAGRPVIEQIKRVSRPGLRIYKASSEIPSVMNGLGIAIVSTSKGVMTDRKARSQGVGGELLCIVA</sequence>